<reference key="1">
    <citation type="submission" date="2007-07" db="EMBL/GenBank/DDBJ databases">
        <title>Complete sequence of chromosome of Shewanella baltica OS185.</title>
        <authorList>
            <consortium name="US DOE Joint Genome Institute"/>
            <person name="Copeland A."/>
            <person name="Lucas S."/>
            <person name="Lapidus A."/>
            <person name="Barry K."/>
            <person name="Glavina del Rio T."/>
            <person name="Dalin E."/>
            <person name="Tice H."/>
            <person name="Pitluck S."/>
            <person name="Sims D."/>
            <person name="Brettin T."/>
            <person name="Bruce D."/>
            <person name="Detter J.C."/>
            <person name="Han C."/>
            <person name="Schmutz J."/>
            <person name="Larimer F."/>
            <person name="Land M."/>
            <person name="Hauser L."/>
            <person name="Kyrpides N."/>
            <person name="Mikhailova N."/>
            <person name="Brettar I."/>
            <person name="Rodrigues J."/>
            <person name="Konstantinidis K."/>
            <person name="Tiedje J."/>
            <person name="Richardson P."/>
        </authorList>
    </citation>
    <scope>NUCLEOTIDE SEQUENCE [LARGE SCALE GENOMIC DNA]</scope>
    <source>
        <strain>OS185</strain>
    </source>
</reference>
<accession>A6WTE7</accession>
<name>FIS_SHEB8</name>
<feature type="chain" id="PRO_1000023336" description="DNA-binding protein Fis">
    <location>
        <begin position="1"/>
        <end position="101"/>
    </location>
</feature>
<feature type="DNA-binding region" description="H-T-H motif" evidence="1">
    <location>
        <begin position="77"/>
        <end position="96"/>
    </location>
</feature>
<gene>
    <name evidence="1" type="primary">fis</name>
    <name type="ordered locus">Shew185_3965</name>
</gene>
<evidence type="ECO:0000255" key="1">
    <source>
        <dbReference type="HAMAP-Rule" id="MF_00166"/>
    </source>
</evidence>
<keyword id="KW-0010">Activator</keyword>
<keyword id="KW-0238">DNA-binding</keyword>
<keyword id="KW-0804">Transcription</keyword>
<keyword id="KW-0805">Transcription regulation</keyword>
<organism>
    <name type="scientific">Shewanella baltica (strain OS185)</name>
    <dbReference type="NCBI Taxonomy" id="402882"/>
    <lineage>
        <taxon>Bacteria</taxon>
        <taxon>Pseudomonadati</taxon>
        <taxon>Pseudomonadota</taxon>
        <taxon>Gammaproteobacteria</taxon>
        <taxon>Alteromonadales</taxon>
        <taxon>Shewanellaceae</taxon>
        <taxon>Shewanella</taxon>
    </lineage>
</organism>
<proteinExistence type="inferred from homology"/>
<dbReference type="EMBL" id="CP000753">
    <property type="protein sequence ID" value="ABS10086.1"/>
    <property type="molecule type" value="Genomic_DNA"/>
</dbReference>
<dbReference type="RefSeq" id="WP_006083371.1">
    <property type="nucleotide sequence ID" value="NC_009665.1"/>
</dbReference>
<dbReference type="SMR" id="A6WTE7"/>
<dbReference type="GeneID" id="94726394"/>
<dbReference type="KEGG" id="sbm:Shew185_3965"/>
<dbReference type="HOGENOM" id="CLU_158040_3_3_6"/>
<dbReference type="GO" id="GO:0003700">
    <property type="term" value="F:DNA-binding transcription factor activity"/>
    <property type="evidence" value="ECO:0007669"/>
    <property type="project" value="UniProtKB-UniRule"/>
</dbReference>
<dbReference type="GO" id="GO:0043565">
    <property type="term" value="F:sequence-specific DNA binding"/>
    <property type="evidence" value="ECO:0007669"/>
    <property type="project" value="InterPro"/>
</dbReference>
<dbReference type="FunFam" id="1.10.10.60:FF:000006">
    <property type="entry name" value="DNA-binding protein Fis"/>
    <property type="match status" value="1"/>
</dbReference>
<dbReference type="Gene3D" id="1.10.10.60">
    <property type="entry name" value="Homeodomain-like"/>
    <property type="match status" value="1"/>
</dbReference>
<dbReference type="HAMAP" id="MF_00166">
    <property type="entry name" value="DNA_binding_Fis"/>
    <property type="match status" value="1"/>
</dbReference>
<dbReference type="InterPro" id="IPR005412">
    <property type="entry name" value="Fis_DNA-bd"/>
</dbReference>
<dbReference type="InterPro" id="IPR009057">
    <property type="entry name" value="Homeodomain-like_sf"/>
</dbReference>
<dbReference type="InterPro" id="IPR002197">
    <property type="entry name" value="HTH_Fis"/>
</dbReference>
<dbReference type="InterPro" id="IPR050207">
    <property type="entry name" value="Trans_regulatory_Fis"/>
</dbReference>
<dbReference type="NCBIfam" id="NF001659">
    <property type="entry name" value="PRK00430.1"/>
    <property type="match status" value="1"/>
</dbReference>
<dbReference type="PANTHER" id="PTHR47918">
    <property type="entry name" value="DNA-BINDING PROTEIN FIS"/>
    <property type="match status" value="1"/>
</dbReference>
<dbReference type="PANTHER" id="PTHR47918:SF1">
    <property type="entry name" value="DNA-BINDING PROTEIN FIS"/>
    <property type="match status" value="1"/>
</dbReference>
<dbReference type="Pfam" id="PF02954">
    <property type="entry name" value="HTH_8"/>
    <property type="match status" value="1"/>
</dbReference>
<dbReference type="PIRSF" id="PIRSF002097">
    <property type="entry name" value="DNA-binding_Fis"/>
    <property type="match status" value="1"/>
</dbReference>
<dbReference type="PRINTS" id="PR01591">
    <property type="entry name" value="DNABINDNGFIS"/>
</dbReference>
<dbReference type="PRINTS" id="PR01590">
    <property type="entry name" value="HTHFIS"/>
</dbReference>
<dbReference type="SUPFAM" id="SSF46689">
    <property type="entry name" value="Homeodomain-like"/>
    <property type="match status" value="1"/>
</dbReference>
<sequence length="101" mass="11390">MFDQTTNTEVHQLTVGKIETANGTIKPQLLRDAVKRAVTNFFAQLDGQEAQEVYEMVLSEVEAPLLDIIMQHTRGNQTRAANMLGINRGTLRKKLKKYGMN</sequence>
<protein>
    <recommendedName>
        <fullName evidence="1">DNA-binding protein Fis</fullName>
    </recommendedName>
</protein>
<comment type="function">
    <text evidence="1">Activates ribosomal RNA transcription. Plays a direct role in upstream activation of rRNA promoters.</text>
</comment>
<comment type="subunit">
    <text evidence="1">Homodimer.</text>
</comment>
<comment type="similarity">
    <text evidence="1">Belongs to the transcriptional regulatory Fis family.</text>
</comment>